<evidence type="ECO:0000305" key="1"/>
<protein>
    <recommendedName>
        <fullName>Late protein I196L</fullName>
    </recommendedName>
</protein>
<keyword id="KW-0426">Late protein</keyword>
<keyword id="KW-0677">Repeat</keyword>
<gene>
    <name type="ordered locus">War-156</name>
</gene>
<proteinExistence type="inferred from homology"/>
<sequence>MLFRYLVWLFRFIEVKNVASISLLVIGSIYLTTAISNNISTTISPTTSSNSLTTAISNNTSTTISPTTTSSNYLTSAISTNISDKEEDTPFSTDKTVFDGLSPITLYRAIRSTLNDTMTDILTRPYRPTTVIFHSDTPQPVKNATQGNIIKKTYRQVLTFFIQPNPLFPCFKNHEVFLNLANILNTILCIILIKNV</sequence>
<comment type="induction">
    <text evidence="1">Expressed in the late phase of the viral replicative cycle.</text>
</comment>
<comment type="similarity">
    <text evidence="1">Belongs to the asfivirus I196L family.</text>
</comment>
<dbReference type="EMBL" id="AY261366">
    <property type="status" value="NOT_ANNOTATED_CDS"/>
    <property type="molecule type" value="Genomic_DNA"/>
</dbReference>
<dbReference type="Proteomes" id="UP000000858">
    <property type="component" value="Segment"/>
</dbReference>
<organism>
    <name type="scientific">African swine fever virus (isolate Warthog/Namibia/Wart80/1980)</name>
    <name type="common">ASFV</name>
    <dbReference type="NCBI Taxonomy" id="561444"/>
    <lineage>
        <taxon>Viruses</taxon>
        <taxon>Varidnaviria</taxon>
        <taxon>Bamfordvirae</taxon>
        <taxon>Nucleocytoviricota</taxon>
        <taxon>Pokkesviricetes</taxon>
        <taxon>Asfuvirales</taxon>
        <taxon>Asfarviridae</taxon>
        <taxon>Asfivirus</taxon>
        <taxon>African swine fever virus</taxon>
    </lineage>
</organism>
<name>VF196_ASFWA</name>
<organismHost>
    <name type="scientific">Ornithodoros</name>
    <name type="common">relapsing fever ticks</name>
    <dbReference type="NCBI Taxonomy" id="6937"/>
</organismHost>
<organismHost>
    <name type="scientific">Phacochoerus aethiopicus</name>
    <name type="common">Warthog</name>
    <dbReference type="NCBI Taxonomy" id="85517"/>
</organismHost>
<organismHost>
    <name type="scientific">Phacochoerus africanus</name>
    <name type="common">Warthog</name>
    <dbReference type="NCBI Taxonomy" id="41426"/>
</organismHost>
<organismHost>
    <name type="scientific">Potamochoerus larvatus</name>
    <name type="common">Bushpig</name>
    <dbReference type="NCBI Taxonomy" id="273792"/>
</organismHost>
<organismHost>
    <name type="scientific">Sus scrofa</name>
    <name type="common">Pig</name>
    <dbReference type="NCBI Taxonomy" id="9823"/>
</organismHost>
<accession>P0CA93</accession>
<reference key="1">
    <citation type="submission" date="2003-03" db="EMBL/GenBank/DDBJ databases">
        <title>African swine fever virus genomes.</title>
        <authorList>
            <person name="Kutish G.F."/>
            <person name="Rock D.L."/>
        </authorList>
    </citation>
    <scope>NUCLEOTIDE SEQUENCE [LARGE SCALE GENOMIC DNA]</scope>
</reference>
<feature type="chain" id="PRO_0000373580" description="Late protein I196L">
    <location>
        <begin position="1"/>
        <end position="196"/>
    </location>
</feature>
<feature type="repeat" description="1">
    <location>
        <begin position="28"/>
        <end position="48"/>
    </location>
</feature>
<feature type="repeat" description="2">
    <location>
        <begin position="49"/>
        <end position="70"/>
    </location>
</feature>
<feature type="repeat" description="3; approximate">
    <location>
        <begin position="71"/>
        <end position="92"/>
    </location>
</feature>